<protein>
    <recommendedName>
        <fullName evidence="1">Small ribosomal subunit protein bS20</fullName>
    </recommendedName>
    <alternativeName>
        <fullName evidence="2">30S ribosomal protein S20</fullName>
    </alternativeName>
</protein>
<name>RS20_SYNPW</name>
<evidence type="ECO:0000255" key="1">
    <source>
        <dbReference type="HAMAP-Rule" id="MF_00500"/>
    </source>
</evidence>
<evidence type="ECO:0000305" key="2"/>
<reference key="1">
    <citation type="submission" date="2006-05" db="EMBL/GenBank/DDBJ databases">
        <authorList>
            <consortium name="Genoscope"/>
        </authorList>
    </citation>
    <scope>NUCLEOTIDE SEQUENCE [LARGE SCALE GENOMIC DNA]</scope>
    <source>
        <strain>WH7803</strain>
    </source>
</reference>
<gene>
    <name evidence="1" type="primary">rpsT</name>
    <name evidence="1" type="synonym">rps20</name>
    <name type="ordered locus">SynWH7803_2064</name>
</gene>
<keyword id="KW-1185">Reference proteome</keyword>
<keyword id="KW-0687">Ribonucleoprotein</keyword>
<keyword id="KW-0689">Ribosomal protein</keyword>
<keyword id="KW-0694">RNA-binding</keyword>
<keyword id="KW-0699">rRNA-binding</keyword>
<dbReference type="EMBL" id="CT971583">
    <property type="protein sequence ID" value="CAK24490.1"/>
    <property type="molecule type" value="Genomic_DNA"/>
</dbReference>
<dbReference type="SMR" id="A5GNH5"/>
<dbReference type="STRING" id="32051.SynWH7803_2064"/>
<dbReference type="KEGG" id="syx:SynWH7803_2064"/>
<dbReference type="eggNOG" id="COG0268">
    <property type="taxonomic scope" value="Bacteria"/>
</dbReference>
<dbReference type="HOGENOM" id="CLU_160655_5_0_3"/>
<dbReference type="OrthoDB" id="9808392at2"/>
<dbReference type="Proteomes" id="UP000001566">
    <property type="component" value="Chromosome"/>
</dbReference>
<dbReference type="GO" id="GO:0005829">
    <property type="term" value="C:cytosol"/>
    <property type="evidence" value="ECO:0007669"/>
    <property type="project" value="TreeGrafter"/>
</dbReference>
<dbReference type="GO" id="GO:0015935">
    <property type="term" value="C:small ribosomal subunit"/>
    <property type="evidence" value="ECO:0007669"/>
    <property type="project" value="TreeGrafter"/>
</dbReference>
<dbReference type="GO" id="GO:0070181">
    <property type="term" value="F:small ribosomal subunit rRNA binding"/>
    <property type="evidence" value="ECO:0007669"/>
    <property type="project" value="TreeGrafter"/>
</dbReference>
<dbReference type="GO" id="GO:0003735">
    <property type="term" value="F:structural constituent of ribosome"/>
    <property type="evidence" value="ECO:0007669"/>
    <property type="project" value="InterPro"/>
</dbReference>
<dbReference type="GO" id="GO:0006412">
    <property type="term" value="P:translation"/>
    <property type="evidence" value="ECO:0007669"/>
    <property type="project" value="UniProtKB-UniRule"/>
</dbReference>
<dbReference type="Gene3D" id="1.20.58.110">
    <property type="entry name" value="Ribosomal protein S20"/>
    <property type="match status" value="1"/>
</dbReference>
<dbReference type="HAMAP" id="MF_00500">
    <property type="entry name" value="Ribosomal_bS20"/>
    <property type="match status" value="1"/>
</dbReference>
<dbReference type="InterPro" id="IPR002583">
    <property type="entry name" value="Ribosomal_bS20"/>
</dbReference>
<dbReference type="InterPro" id="IPR036510">
    <property type="entry name" value="Ribosomal_bS20_sf"/>
</dbReference>
<dbReference type="NCBIfam" id="TIGR00029">
    <property type="entry name" value="S20"/>
    <property type="match status" value="1"/>
</dbReference>
<dbReference type="PANTHER" id="PTHR33398">
    <property type="entry name" value="30S RIBOSOMAL PROTEIN S20"/>
    <property type="match status" value="1"/>
</dbReference>
<dbReference type="PANTHER" id="PTHR33398:SF1">
    <property type="entry name" value="SMALL RIBOSOMAL SUBUNIT PROTEIN BS20C"/>
    <property type="match status" value="1"/>
</dbReference>
<dbReference type="Pfam" id="PF01649">
    <property type="entry name" value="Ribosomal_S20p"/>
    <property type="match status" value="1"/>
</dbReference>
<dbReference type="SUPFAM" id="SSF46992">
    <property type="entry name" value="Ribosomal protein S20"/>
    <property type="match status" value="1"/>
</dbReference>
<organism>
    <name type="scientific">Synechococcus sp. (strain WH7803)</name>
    <dbReference type="NCBI Taxonomy" id="32051"/>
    <lineage>
        <taxon>Bacteria</taxon>
        <taxon>Bacillati</taxon>
        <taxon>Cyanobacteriota</taxon>
        <taxon>Cyanophyceae</taxon>
        <taxon>Synechococcales</taxon>
        <taxon>Synechococcaceae</taxon>
        <taxon>Synechococcus</taxon>
    </lineage>
</organism>
<accession>A5GNH5</accession>
<sequence>MANNKSSKKRVEIAERNRLQNKAYKSSMRTLMKRCFSACEAYNATPGDEAKTSVQASMNAAFSKIDKAVKRGVLHRNAGAHQKARLSVAVKKAIDPAPASAS</sequence>
<feature type="chain" id="PRO_1000014668" description="Small ribosomal subunit protein bS20">
    <location>
        <begin position="1"/>
        <end position="102"/>
    </location>
</feature>
<proteinExistence type="inferred from homology"/>
<comment type="function">
    <text evidence="1">Binds directly to 16S ribosomal RNA.</text>
</comment>
<comment type="similarity">
    <text evidence="1">Belongs to the bacterial ribosomal protein bS20 family.</text>
</comment>